<gene>
    <name evidence="1" type="primary">RTEL1</name>
</gene>
<reference key="1">
    <citation type="journal article" date="2007" name="BMC Mol. Biol.">
        <title>Identification and characterization of bovine regulator of telomere length elongation helicase gene (RTEL): molecular cloning, expression distribution, splice variants and DNA methylation profile.</title>
        <authorList>
            <person name="Du Z."/>
            <person name="Zhao D."/>
            <person name="Zhao Y."/>
            <person name="Wang S."/>
            <person name="Gao Y."/>
            <person name="Li N."/>
        </authorList>
    </citation>
    <scope>NUCLEOTIDE SEQUENCE [GENOMIC DNA / MRNA] (ISOFORMS 1; 2; 3; 4 AND 5)</scope>
    <scope>TISSUE SPECIFICITY</scope>
    <scope>DEVELOPMENTAL STAGE</scope>
</reference>
<sequence>MPKITLKGVTVDFPFQPYKCQEEYMSKVLECLQEKVNGILESPTGTGKTLCLLCSTLAWREHLRDAVSARRIAERASGELFPDRTLASWGNAIPEGDVPACYTDIPKIIYASRTHSQLTQVISELRNTSYRPRVCVLGSREQLCIHPEVKKQESNHMQVHLCRRKVASRSCHFYNNVEEKSLEQELATPILDIEDLVRSGTKHKLCPYYLSRNLKQQADIIFMPYNYLLDAKSRRAHGIDLKGTVVIFDEAHNVEKMCEEAASFDLTPHDVASELDVIDRVLEERTKVAQQAELHPEFSADSARSGLNLEPEDLAKLKMILLRLEGAIDAVELPGDNSGVTKPGSYIFELFAEAQITFQTKGCILDSLDQLIQHLAGRAGLFTNTAGLQKLVDIIQIVFSVDSAEGDPGPMVGLASQSYKVHIHLDAGHRRTAQRSDVWNTTAARKPGKVLSYWCFSPGHSMRELVRQGVRTLILTSGTLAPMASFSLEMQIPFPVCLENPHVINQHQIWVGVIPKGPDGAQLSSAFDRRFSDECLSSLGKVLSNISRVVPHGLLVFFPSYPVMEKSLEFWRARDFTRKLEVRKPLFVEPRSKGGFSEVMEAFYARVAAPESSGAIFLAVCRGKASEGLDFADVNGRGVIVTGLPYPPRMDPRVLLKMQFLDEMKAQSGAGGQFLSGHDWYRQQASRAVNQAIGRVIRHRHDYGAVFLCDHRFAHADTRAQLPSWVRPHVKVYDSFGHVIRDVAQFFRVAQKTMPEPAPRAAAPSLGEGGGIVSVSVSPGPLPTRKAMSLDVHVPSLRQRHTGSPVTKDTEGSLCVEYEQEPVRAQRRPAGLLAALGHNEQLAEGPGDEALPVEEACGCPTLLGPREKRPAEEQRGRRRKVRLVGSSEVPAASTDTGRAKLFMVAVKQALSQASFDTFTQALRDYKSSDDLEALVARLSPLFAEDPKKHSLLQGFYQFVRPHHKQQFEEVCLQLTGQGCSSPHKHGHPQRQGAQLALDSSGRKESDPKLTVSQGATRQLDPCEQLNQGRPHLASGPFPAGDLNCSLHKGSRAPGAEKQHPSTVSAYLADVRRTLGAAGYSQLLTALTTYKQDDDFEKVVAVVAALTTEKPEDLPLLQRFGMFVRPHHKQRFRQMCVDLSGPGTQAPGPQEGGPAMPSDPVCEAPSPGPRKTQSKISSFLRCQACWRQHLQVSRKCPGCCAATRKQTLAQVFWPEPQ</sequence>
<feature type="chain" id="PRO_0000370609" description="Regulator of telomere elongation helicase 1">
    <location>
        <begin position="1"/>
        <end position="1216"/>
    </location>
</feature>
<feature type="domain" description="Helicase ATP-binding" evidence="1">
    <location>
        <begin position="7"/>
        <end position="295"/>
    </location>
</feature>
<feature type="region of interest" description="Disordered" evidence="2">
    <location>
        <begin position="978"/>
        <end position="1018"/>
    </location>
</feature>
<feature type="region of interest" description="Disordered" evidence="2">
    <location>
        <begin position="1140"/>
        <end position="1172"/>
    </location>
</feature>
<feature type="short sequence motif" description="Nuclear localization signal" evidence="1">
    <location>
        <begin position="150"/>
        <end position="166"/>
    </location>
</feature>
<feature type="short sequence motif" description="DEAH box">
    <location>
        <begin position="249"/>
        <end position="252"/>
    </location>
</feature>
<feature type="short sequence motif" description="Nuclear localization signal" evidence="1">
    <location>
        <begin position="874"/>
        <end position="880"/>
    </location>
</feature>
<feature type="short sequence motif" description="PIP-box">
    <location>
        <begin position="1172"/>
        <end position="1179"/>
    </location>
</feature>
<feature type="binding site" evidence="1">
    <location>
        <begin position="42"/>
        <end position="49"/>
    </location>
    <ligand>
        <name>ATP</name>
        <dbReference type="ChEBI" id="CHEBI:30616"/>
    </ligand>
</feature>
<feature type="binding site" evidence="1">
    <location>
        <position position="144"/>
    </location>
    <ligand>
        <name>[4Fe-4S] cluster</name>
        <dbReference type="ChEBI" id="CHEBI:49883"/>
    </ligand>
</feature>
<feature type="binding site" evidence="1">
    <location>
        <position position="162"/>
    </location>
    <ligand>
        <name>[4Fe-4S] cluster</name>
        <dbReference type="ChEBI" id="CHEBI:49883"/>
    </ligand>
</feature>
<feature type="binding site" evidence="1">
    <location>
        <position position="171"/>
    </location>
    <ligand>
        <name>[4Fe-4S] cluster</name>
        <dbReference type="ChEBI" id="CHEBI:49883"/>
    </ligand>
</feature>
<feature type="binding site" evidence="1">
    <location>
        <position position="206"/>
    </location>
    <ligand>
        <name>[4Fe-4S] cluster</name>
        <dbReference type="ChEBI" id="CHEBI:49883"/>
    </ligand>
</feature>
<feature type="splice variant" id="VSP_036941" description="In isoform 5." evidence="4">
    <original>VSAYLADVRRTLGAAGYSQLLTALTTYKQDDDFEKVVAVVAALTTEKPEDLPLLQRFGMFVRPHHKQRFRQMCVDLSGPGTQAPGPQEGGPAMPSDPVCEAPSPGPRKTQSKISSFLRCQACWRQHLQVSRKCPGCCAATRKQTLAQVFWPEPQ</original>
    <variation>GSACSCGHTTSSASDRCVWT</variation>
    <location>
        <begin position="1063"/>
        <end position="1216"/>
    </location>
</feature>
<feature type="splice variant" id="VSP_036942" description="In isoform 2." evidence="4">
    <location>
        <begin position="1063"/>
        <end position="1091"/>
    </location>
</feature>
<feature type="splice variant" id="VSP_036943" description="In isoform 4." evidence="4">
    <original>FGMFVRPHHKQRFRQMCVDLSGPGTQAPGPQEGGPAMPSDPVCEAPSPGPRKTQSKISSFLRCQACWRQHLQVSRKCPGCCAATRKQTLAQVFWPEPQ</original>
    <variation>CLE</variation>
    <location>
        <begin position="1119"/>
        <end position="1216"/>
    </location>
</feature>
<feature type="splice variant" id="VSP_036944" description="In isoform 2 and isoform 3." evidence="4">
    <original>S</original>
    <variation>SFLMQRTAEDTGAPGSPLSFPRGQAQLEWAGVACAGCRAEDVVFFKCPSCD</variation>
    <location>
        <position position="1177"/>
    </location>
</feature>
<name>RTEL1_BOVIN</name>
<proteinExistence type="evidence at transcript level"/>
<accession>A4K436</accession>
<accession>A4K3A3</accession>
<accession>A4K434</accession>
<accession>A4K435</accession>
<accession>A5J092</accession>
<protein>
    <recommendedName>
        <fullName evidence="1">Regulator of telomere elongation helicase 1</fullName>
        <ecNumber evidence="1">5.6.2.-</ecNumber>
    </recommendedName>
</protein>
<organism>
    <name type="scientific">Bos taurus</name>
    <name type="common">Bovine</name>
    <dbReference type="NCBI Taxonomy" id="9913"/>
    <lineage>
        <taxon>Eukaryota</taxon>
        <taxon>Metazoa</taxon>
        <taxon>Chordata</taxon>
        <taxon>Craniata</taxon>
        <taxon>Vertebrata</taxon>
        <taxon>Euteleostomi</taxon>
        <taxon>Mammalia</taxon>
        <taxon>Eutheria</taxon>
        <taxon>Laurasiatheria</taxon>
        <taxon>Artiodactyla</taxon>
        <taxon>Ruminantia</taxon>
        <taxon>Pecora</taxon>
        <taxon>Bovidae</taxon>
        <taxon>Bovinae</taxon>
        <taxon>Bos</taxon>
    </lineage>
</organism>
<dbReference type="EC" id="5.6.2.-" evidence="1"/>
<dbReference type="EMBL" id="DQ323152">
    <property type="protein sequence ID" value="ABC54575.1"/>
    <property type="molecule type" value="Genomic_DNA"/>
</dbReference>
<dbReference type="EMBL" id="DQ323153">
    <property type="protein sequence ID" value="ABC54576.1"/>
    <property type="molecule type" value="mRNA"/>
</dbReference>
<dbReference type="EMBL" id="DQ420360">
    <property type="protein sequence ID" value="ABD78306.1"/>
    <property type="molecule type" value="mRNA"/>
</dbReference>
<dbReference type="EMBL" id="DQ420361">
    <property type="protein sequence ID" value="ABD78307.1"/>
    <property type="molecule type" value="mRNA"/>
</dbReference>
<dbReference type="EMBL" id="DQ420362">
    <property type="protein sequence ID" value="ABD78308.1"/>
    <property type="molecule type" value="mRNA"/>
</dbReference>
<dbReference type="EMBL" id="DQ420363">
    <property type="protein sequence ID" value="ABD78309.1"/>
    <property type="molecule type" value="mRNA"/>
</dbReference>
<dbReference type="RefSeq" id="NP_001091044.1">
    <molecule id="A4K436-3"/>
    <property type="nucleotide sequence ID" value="NM_001097575.1"/>
</dbReference>
<dbReference type="SMR" id="A4K436"/>
<dbReference type="FunCoup" id="A4K436">
    <property type="interactions" value="2515"/>
</dbReference>
<dbReference type="STRING" id="9913.ENSBTAP00000028108"/>
<dbReference type="PaxDb" id="9913-ENSBTAP00000051019"/>
<dbReference type="GeneID" id="505721"/>
<dbReference type="KEGG" id="bta:505721"/>
<dbReference type="CTD" id="51750"/>
<dbReference type="eggNOG" id="KOG1132">
    <property type="taxonomic scope" value="Eukaryota"/>
</dbReference>
<dbReference type="InParanoid" id="A4K436"/>
<dbReference type="OrthoDB" id="19182at2759"/>
<dbReference type="Proteomes" id="UP000009136">
    <property type="component" value="Unplaced"/>
</dbReference>
<dbReference type="GO" id="GO:0005634">
    <property type="term" value="C:nucleus"/>
    <property type="evidence" value="ECO:0000250"/>
    <property type="project" value="UniProtKB"/>
</dbReference>
<dbReference type="GO" id="GO:0051539">
    <property type="term" value="F:4 iron, 4 sulfur cluster binding"/>
    <property type="evidence" value="ECO:0007669"/>
    <property type="project" value="UniProtKB-UniRule"/>
</dbReference>
<dbReference type="GO" id="GO:0005524">
    <property type="term" value="F:ATP binding"/>
    <property type="evidence" value="ECO:0000250"/>
    <property type="project" value="UniProtKB"/>
</dbReference>
<dbReference type="GO" id="GO:0016887">
    <property type="term" value="F:ATP hydrolysis activity"/>
    <property type="evidence" value="ECO:0007669"/>
    <property type="project" value="RHEA"/>
</dbReference>
<dbReference type="GO" id="GO:0003677">
    <property type="term" value="F:DNA binding"/>
    <property type="evidence" value="ECO:0007669"/>
    <property type="project" value="UniProtKB-UniRule"/>
</dbReference>
<dbReference type="GO" id="GO:0003678">
    <property type="term" value="F:DNA helicase activity"/>
    <property type="evidence" value="ECO:0000250"/>
    <property type="project" value="UniProtKB"/>
</dbReference>
<dbReference type="GO" id="GO:0070182">
    <property type="term" value="F:DNA polymerase binding"/>
    <property type="evidence" value="ECO:0000318"/>
    <property type="project" value="GO_Central"/>
</dbReference>
<dbReference type="GO" id="GO:0046872">
    <property type="term" value="F:metal ion binding"/>
    <property type="evidence" value="ECO:0007669"/>
    <property type="project" value="UniProtKB-UniRule"/>
</dbReference>
<dbReference type="GO" id="GO:0006310">
    <property type="term" value="P:DNA recombination"/>
    <property type="evidence" value="ECO:0007669"/>
    <property type="project" value="InterPro"/>
</dbReference>
<dbReference type="GO" id="GO:0006281">
    <property type="term" value="P:DNA repair"/>
    <property type="evidence" value="ECO:0007669"/>
    <property type="project" value="UniProtKB-UniRule"/>
</dbReference>
<dbReference type="GO" id="GO:0006260">
    <property type="term" value="P:DNA replication"/>
    <property type="evidence" value="ECO:0007669"/>
    <property type="project" value="InterPro"/>
</dbReference>
<dbReference type="GO" id="GO:0045910">
    <property type="term" value="P:negative regulation of DNA recombination"/>
    <property type="evidence" value="ECO:0000318"/>
    <property type="project" value="GO_Central"/>
</dbReference>
<dbReference type="GO" id="GO:1904430">
    <property type="term" value="P:negative regulation of t-circle formation"/>
    <property type="evidence" value="ECO:0000318"/>
    <property type="project" value="GO_Central"/>
</dbReference>
<dbReference type="GO" id="GO:0010569">
    <property type="term" value="P:regulation of double-strand break repair via homologous recombination"/>
    <property type="evidence" value="ECO:0000250"/>
    <property type="project" value="UniProtKB"/>
</dbReference>
<dbReference type="GO" id="GO:0000723">
    <property type="term" value="P:telomere maintenance"/>
    <property type="evidence" value="ECO:0000250"/>
    <property type="project" value="UniProtKB"/>
</dbReference>
<dbReference type="GO" id="GO:0090657">
    <property type="term" value="P:telomeric loop disassembly"/>
    <property type="evidence" value="ECO:0000318"/>
    <property type="project" value="GO_Central"/>
</dbReference>
<dbReference type="CDD" id="cd17970">
    <property type="entry name" value="DEAHc_FancJ"/>
    <property type="match status" value="1"/>
</dbReference>
<dbReference type="CDD" id="cd13932">
    <property type="entry name" value="HN_RTEL1"/>
    <property type="match status" value="2"/>
</dbReference>
<dbReference type="CDD" id="cd18788">
    <property type="entry name" value="SF2_C_XPD"/>
    <property type="match status" value="1"/>
</dbReference>
<dbReference type="FunFam" id="1.20.1160.20:FF:000006">
    <property type="entry name" value="Regulator of telomere elongation helicase 1"/>
    <property type="match status" value="1"/>
</dbReference>
<dbReference type="FunFam" id="1.20.1160.20:FF:000009">
    <property type="entry name" value="Regulator of telomere elongation helicase 1"/>
    <property type="match status" value="1"/>
</dbReference>
<dbReference type="FunFam" id="3.40.50.300:FF:000431">
    <property type="entry name" value="Regulator of telomere elongation helicase 1"/>
    <property type="match status" value="1"/>
</dbReference>
<dbReference type="FunFam" id="3.40.50.300:FF:000691">
    <property type="entry name" value="Regulator of telomere elongation helicase 1"/>
    <property type="match status" value="1"/>
</dbReference>
<dbReference type="Gene3D" id="1.20.1160.20">
    <property type="match status" value="2"/>
</dbReference>
<dbReference type="Gene3D" id="3.40.50.300">
    <property type="entry name" value="P-loop containing nucleotide triphosphate hydrolases"/>
    <property type="match status" value="2"/>
</dbReference>
<dbReference type="HAMAP" id="MF_03065">
    <property type="entry name" value="RTEL1"/>
    <property type="match status" value="1"/>
</dbReference>
<dbReference type="InterPro" id="IPR006555">
    <property type="entry name" value="ATP-dep_Helicase_C"/>
</dbReference>
<dbReference type="InterPro" id="IPR045028">
    <property type="entry name" value="DinG/Rad3-like"/>
</dbReference>
<dbReference type="InterPro" id="IPR014013">
    <property type="entry name" value="Helic_SF1/SF2_ATP-bd_DinG/Rad3"/>
</dbReference>
<dbReference type="InterPro" id="IPR006554">
    <property type="entry name" value="Helicase-like_DEXD_c2"/>
</dbReference>
<dbReference type="InterPro" id="IPR049909">
    <property type="entry name" value="HHD_RTEL1"/>
</dbReference>
<dbReference type="InterPro" id="IPR027417">
    <property type="entry name" value="P-loop_NTPase"/>
</dbReference>
<dbReference type="InterPro" id="IPR010614">
    <property type="entry name" value="RAD3-like_helicase_DEAD"/>
</dbReference>
<dbReference type="InterPro" id="IPR013020">
    <property type="entry name" value="Rad3/Chl1-like"/>
</dbReference>
<dbReference type="InterPro" id="IPR030845">
    <property type="entry name" value="RTEL1"/>
</dbReference>
<dbReference type="NCBIfam" id="TIGR00604">
    <property type="entry name" value="rad3"/>
    <property type="match status" value="1"/>
</dbReference>
<dbReference type="PANTHER" id="PTHR11472">
    <property type="entry name" value="DNA REPAIR DEAD HELICASE RAD3/XP-D SUBFAMILY MEMBER"/>
    <property type="match status" value="1"/>
</dbReference>
<dbReference type="PANTHER" id="PTHR11472:SF34">
    <property type="entry name" value="REGULATOR OF TELOMERE ELONGATION HELICASE 1"/>
    <property type="match status" value="1"/>
</dbReference>
<dbReference type="Pfam" id="PF23109">
    <property type="entry name" value="ARCH_RTEL1"/>
    <property type="match status" value="1"/>
</dbReference>
<dbReference type="Pfam" id="PF06733">
    <property type="entry name" value="DEAD_2"/>
    <property type="match status" value="1"/>
</dbReference>
<dbReference type="Pfam" id="PF13307">
    <property type="entry name" value="Helicase_C_2"/>
    <property type="match status" value="1"/>
</dbReference>
<dbReference type="Pfam" id="PF23116">
    <property type="entry name" value="HHD_RTEL1"/>
    <property type="match status" value="2"/>
</dbReference>
<dbReference type="SMART" id="SM00488">
    <property type="entry name" value="DEXDc2"/>
    <property type="match status" value="1"/>
</dbReference>
<dbReference type="SMART" id="SM00491">
    <property type="entry name" value="HELICc2"/>
    <property type="match status" value="1"/>
</dbReference>
<dbReference type="SUPFAM" id="SSF52540">
    <property type="entry name" value="P-loop containing nucleoside triphosphate hydrolases"/>
    <property type="match status" value="2"/>
</dbReference>
<dbReference type="PROSITE" id="PS51193">
    <property type="entry name" value="HELICASE_ATP_BIND_2"/>
    <property type="match status" value="1"/>
</dbReference>
<keyword id="KW-0004">4Fe-4S</keyword>
<keyword id="KW-0025">Alternative splicing</keyword>
<keyword id="KW-0067">ATP-binding</keyword>
<keyword id="KW-0227">DNA damage</keyword>
<keyword id="KW-0234">DNA repair</keyword>
<keyword id="KW-0238">DNA-binding</keyword>
<keyword id="KW-0347">Helicase</keyword>
<keyword id="KW-0378">Hydrolase</keyword>
<keyword id="KW-0408">Iron</keyword>
<keyword id="KW-0411">Iron-sulfur</keyword>
<keyword id="KW-0413">Isomerase</keyword>
<keyword id="KW-0479">Metal-binding</keyword>
<keyword id="KW-0547">Nucleotide-binding</keyword>
<keyword id="KW-0539">Nucleus</keyword>
<keyword id="KW-1185">Reference proteome</keyword>
<comment type="function">
    <text evidence="1">A probable ATP-dependent DNA helicase implicated in telomere-length regulation, DNA repair and the maintenance of genomic stability. Acts as an anti-recombinase to counteract toxic recombination and limit crossover during meiosis. Regulates meiotic recombination and crossover homeostasis by physically dissociating strand invasion events and thereby promotes noncrossover repair by meiotic synthesis dependent strand annealing (SDSA) as well as disassembly of D loop recombination intermediates. Also disassembles T loops and prevents telomere fragility by counteracting telomeric G4-DNA structures, which together ensure the dynamics and stability of the telomere.</text>
</comment>
<comment type="catalytic activity">
    <reaction evidence="1">
        <text>ATP + H2O = ADP + phosphate + H(+)</text>
        <dbReference type="Rhea" id="RHEA:13065"/>
        <dbReference type="ChEBI" id="CHEBI:15377"/>
        <dbReference type="ChEBI" id="CHEBI:15378"/>
        <dbReference type="ChEBI" id="CHEBI:30616"/>
        <dbReference type="ChEBI" id="CHEBI:43474"/>
        <dbReference type="ChEBI" id="CHEBI:456216"/>
    </reaction>
</comment>
<comment type="subunit">
    <text evidence="1">Interacts with TERF1. Interacts (via PIP-box) with PCNA; the interaction is direct and essential for suppressing telomere fragility. Interacts with MMS19; the interaction mediates the association of RTEL1 with the cytosolic iron-sulfur protein assembly (CIA) complex.</text>
</comment>
<comment type="subcellular location">
    <subcellularLocation>
        <location evidence="1">Nucleus</location>
    </subcellularLocation>
    <text evidence="1">Colocalizes with PCNA within the replication foci in S-phase cells.</text>
</comment>
<comment type="alternative products">
    <event type="alternative splicing"/>
    <isoform>
        <id>A4K436-1</id>
        <name>1</name>
        <name>SV-3</name>
        <sequence type="displayed"/>
    </isoform>
    <isoform>
        <id>A4K436-2</id>
        <name>2</name>
        <name>SV-2</name>
        <sequence type="described" ref="VSP_036942 VSP_036944"/>
    </isoform>
    <isoform>
        <id>A4K436-3</id>
        <name>3</name>
        <sequence type="described" ref="VSP_036944"/>
    </isoform>
    <isoform>
        <id>A4K436-4</id>
        <name>4</name>
        <sequence type="described" ref="VSP_036943"/>
    </isoform>
    <isoform>
        <id>A4K436-5</id>
        <name>5</name>
        <name>SV-1</name>
        <sequence type="described" ref="VSP_036941"/>
    </isoform>
</comment>
<comment type="tissue specificity">
    <text evidence="3">Highly expressed in adult testis, liver and ovary.</text>
</comment>
<comment type="developmental stage">
    <text evidence="3">Expressed from the blastocyst stage.</text>
</comment>
<comment type="domain">
    <text evidence="1">The PIP-box (PCNA interacting peptide) motif mediates the interaction with PCNA and localization to replication foci.</text>
</comment>
<comment type="similarity">
    <text evidence="1">Belongs to the helicase family. RAD3/XPD subfamily.</text>
</comment>
<evidence type="ECO:0000255" key="1">
    <source>
        <dbReference type="HAMAP-Rule" id="MF_03065"/>
    </source>
</evidence>
<evidence type="ECO:0000256" key="2">
    <source>
        <dbReference type="SAM" id="MobiDB-lite"/>
    </source>
</evidence>
<evidence type="ECO:0000269" key="3">
    <source>
    </source>
</evidence>
<evidence type="ECO:0000303" key="4">
    <source>
    </source>
</evidence>